<comment type="function">
    <text evidence="2 5 6 7 8">Sigma factors are initiation factors that promote the attachment of RNA polymerase to specific initiation sites and are then released. This sigma factor controls the expression of flagella-related genes.</text>
</comment>
<comment type="interaction">
    <interactant intactId="EBI-549807">
        <id>P0AEM6</id>
    </interactant>
    <interactant intactId="EBI-1121952">
        <id>P0AEM4</id>
        <label>flgM</label>
    </interactant>
    <organismsDiffer>false</organismsDiffer>
    <experiments>4</experiments>
</comment>
<comment type="subcellular location">
    <subcellularLocation>
        <location evidence="2">Cytoplasm</location>
    </subcellularLocation>
</comment>
<comment type="domain">
    <text evidence="1">The sigma-70 factor domain-2 mediates sequence-specific interaction with the -10 element in promoter DNA, and plays an important role in melting the double-stranded DNA and the formation of the transcription bubble. The sigma-70 factor domain-2 mediates interaction with the RNA polymerase subunits RpoB and RpoC (By similarity).</text>
</comment>
<comment type="domain">
    <text evidence="1">The sigma-70 factor domain-4 contains a helix-turn-helix (H-T-H) motif that mediates interaction with the -35 element in promoter DNA. The domain also mediates interaction with the RNA polymerase subunit RpoA (By similarity).</text>
</comment>
<comment type="disruption phenotype">
    <text evidence="3">Mutants have poor biofilms (decrease in biomass, surface coverage and mean thickness).</text>
</comment>
<comment type="miscellaneous">
    <text evidence="9">The distinguishing feature of FliA promoters is a long -10 region (GCCGATAA). The upstream GC constitutes an extended -10 motif and is recognized by Arg-91 (PubMed:19400790).</text>
</comment>
<comment type="similarity">
    <text evidence="2">Belongs to the sigma-70 factor family. FliA subfamily.</text>
</comment>
<keyword id="KW-0002">3D-structure</keyword>
<keyword id="KW-0963">Cytoplasm</keyword>
<keyword id="KW-0238">DNA-binding</keyword>
<keyword id="KW-1185">Reference proteome</keyword>
<keyword id="KW-0731">Sigma factor</keyword>
<keyword id="KW-0804">Transcription</keyword>
<keyword id="KW-0805">Transcription regulation</keyword>
<accession>P0AEM6</accession>
<accession>P31804</accession>
<proteinExistence type="evidence at protein level"/>
<reference key="1">
    <citation type="journal article" date="1995" name="Gene">
        <title>An alternative sigma factor controls transcription of flagellar class-III operons in Escherichia coli: gene sequence, overproduction, purification and characterization.</title>
        <authorList>
            <person name="Liu X."/>
            <person name="Matsumura P."/>
        </authorList>
    </citation>
    <scope>NUCLEOTIDE SEQUENCE [GENOMIC DNA]</scope>
    <scope>FUNCTION</scope>
    <source>
        <strain>K12</strain>
    </source>
</reference>
<reference key="2">
    <citation type="journal article" date="1996" name="J. Bacteriol.">
        <title>Escherichia coli fliAZY operon.</title>
        <authorList>
            <person name="Mytelka D.S."/>
            <person name="Chamberlin M.J."/>
        </authorList>
    </citation>
    <scope>NUCLEOTIDE SEQUENCE [GENOMIC DNA]</scope>
    <source>
        <strain>K12 / RP437</strain>
    </source>
</reference>
<reference key="3">
    <citation type="journal article" date="1996" name="DNA Res.">
        <title>A 460-kb DNA sequence of the Escherichia coli K-12 genome corresponding to the 40.1-50.0 min region on the linkage map.</title>
        <authorList>
            <person name="Itoh T."/>
            <person name="Aiba H."/>
            <person name="Baba T."/>
            <person name="Fujita K."/>
            <person name="Hayashi K."/>
            <person name="Inada T."/>
            <person name="Isono K."/>
            <person name="Kasai H."/>
            <person name="Kimura S."/>
            <person name="Kitakawa M."/>
            <person name="Kitagawa M."/>
            <person name="Makino K."/>
            <person name="Miki T."/>
            <person name="Mizobuchi K."/>
            <person name="Mori H."/>
            <person name="Mori T."/>
            <person name="Motomura K."/>
            <person name="Nakade S."/>
            <person name="Nakamura Y."/>
            <person name="Nashimoto H."/>
            <person name="Nishio Y."/>
            <person name="Oshima T."/>
            <person name="Saito N."/>
            <person name="Sampei G."/>
            <person name="Seki Y."/>
            <person name="Sivasundaram S."/>
            <person name="Tagami H."/>
            <person name="Takeda J."/>
            <person name="Takemoto K."/>
            <person name="Wada C."/>
            <person name="Yamamoto Y."/>
            <person name="Horiuchi T."/>
        </authorList>
    </citation>
    <scope>NUCLEOTIDE SEQUENCE [LARGE SCALE GENOMIC DNA]</scope>
    <source>
        <strain>K12 / W3110 / ATCC 27325 / DSM 5911</strain>
    </source>
</reference>
<reference key="4">
    <citation type="journal article" date="1997" name="Science">
        <title>The complete genome sequence of Escherichia coli K-12.</title>
        <authorList>
            <person name="Blattner F.R."/>
            <person name="Plunkett G. III"/>
            <person name="Bloch C.A."/>
            <person name="Perna N.T."/>
            <person name="Burland V."/>
            <person name="Riley M."/>
            <person name="Collado-Vides J."/>
            <person name="Glasner J.D."/>
            <person name="Rode C.K."/>
            <person name="Mayhew G.F."/>
            <person name="Gregor J."/>
            <person name="Davis N.W."/>
            <person name="Kirkpatrick H.A."/>
            <person name="Goeden M.A."/>
            <person name="Rose D.J."/>
            <person name="Mau B."/>
            <person name="Shao Y."/>
        </authorList>
    </citation>
    <scope>NUCLEOTIDE SEQUENCE [LARGE SCALE GENOMIC DNA]</scope>
    <source>
        <strain>K12 / MG1655 / ATCC 47076</strain>
    </source>
</reference>
<reference key="5">
    <citation type="journal article" date="2006" name="Mol. Syst. Biol.">
        <title>Highly accurate genome sequences of Escherichia coli K-12 strains MG1655 and W3110.</title>
        <authorList>
            <person name="Hayashi K."/>
            <person name="Morooka N."/>
            <person name="Yamamoto Y."/>
            <person name="Fujita K."/>
            <person name="Isono K."/>
            <person name="Choi S."/>
            <person name="Ohtsubo E."/>
            <person name="Baba T."/>
            <person name="Wanner B.L."/>
            <person name="Mori H."/>
            <person name="Horiuchi T."/>
        </authorList>
    </citation>
    <scope>NUCLEOTIDE SEQUENCE [LARGE SCALE GENOMIC DNA]</scope>
    <source>
        <strain>K12 / W3110 / ATCC 27325 / DSM 5911</strain>
    </source>
</reference>
<reference key="6">
    <citation type="journal article" date="1986" name="J. Bacteriol.">
        <title>Transcriptional control of flagellar genes in Escherichia coli K-12.</title>
        <authorList>
            <person name="Komeda Y."/>
        </authorList>
    </citation>
    <scope>FUNCTION</scope>
</reference>
<reference key="7">
    <citation type="journal article" date="1989" name="Proc. Natl. Acad. Sci. U.S.A.">
        <title>Secondary sigma factor controls transcription of flagellar and chemotaxis genes in Escherichia coli.</title>
        <authorList>
            <person name="Arnosti D.N."/>
            <person name="Chamberlin M.J."/>
        </authorList>
    </citation>
    <scope>FUNCTION</scope>
</reference>
<reference key="8">
    <citation type="journal article" date="1996" name="Mol. Microbiol.">
        <title>Differential regulation of multiple overlapping promoters in flagellar class II operons in Escherichia coli.</title>
        <authorList>
            <person name="Liu X."/>
            <person name="Matsumura P."/>
        </authorList>
    </citation>
    <scope>FUNCTION</scope>
</reference>
<reference key="9">
    <citation type="journal article" date="2006" name="Appl. Microbiol. Biotechnol.">
        <title>Motility influences biofilm architecture in Escherichia coli.</title>
        <authorList>
            <person name="Wood T.K."/>
            <person name="Gonzalez Barrios A.F."/>
            <person name="Herzberg M."/>
            <person name="Lee J."/>
        </authorList>
    </citation>
    <scope>DISRUPTION PHENOTYPE</scope>
</reference>
<reference key="10">
    <citation type="journal article" date="2009" name="Mol. Microbiol.">
        <title>Mutational analysis of Escherichia coli sigma28 and its target promoters reveals recognition of a composite -10 region, comprised of an 'extended -10' motif and a core -10 element.</title>
        <authorList>
            <person name="Koo B.M."/>
            <person name="Rhodius V.A."/>
            <person name="Campbell E.A."/>
            <person name="Gross C.A."/>
        </authorList>
    </citation>
    <scope>MUTAGENESIS OF GLN-73; ARG-74; ALA-78; ASP-81; ARG-84; ARG-91; SER-92; ARG-94; ARG-95; ASN-96 AND ARG-98</scope>
</reference>
<dbReference type="EMBL" id="L36677">
    <property type="protein sequence ID" value="AAC37011.1"/>
    <property type="molecule type" value="Genomic_DNA"/>
</dbReference>
<dbReference type="EMBL" id="U18539">
    <property type="protein sequence ID" value="AAC43543.1"/>
    <property type="molecule type" value="Genomic_DNA"/>
</dbReference>
<dbReference type="EMBL" id="U00096">
    <property type="protein sequence ID" value="AAC74989.1"/>
    <property type="molecule type" value="Genomic_DNA"/>
</dbReference>
<dbReference type="EMBL" id="AP009048">
    <property type="protein sequence ID" value="BAA15742.1"/>
    <property type="molecule type" value="Genomic_DNA"/>
</dbReference>
<dbReference type="PIR" id="JC4346">
    <property type="entry name" value="JC4346"/>
</dbReference>
<dbReference type="RefSeq" id="NP_416432.3">
    <property type="nucleotide sequence ID" value="NC_000913.3"/>
</dbReference>
<dbReference type="RefSeq" id="WP_001087467.1">
    <property type="nucleotide sequence ID" value="NZ_SSZK01000069.1"/>
</dbReference>
<dbReference type="PDB" id="6PMI">
    <property type="method" value="EM"/>
    <property type="resolution" value="3.86 A"/>
    <property type="chains" value="F=1-239"/>
</dbReference>
<dbReference type="PDB" id="6PMJ">
    <property type="method" value="EM"/>
    <property type="resolution" value="3.91 A"/>
    <property type="chains" value="F=1-239"/>
</dbReference>
<dbReference type="PDBsum" id="6PMI"/>
<dbReference type="PDBsum" id="6PMJ"/>
<dbReference type="EMDB" id="EMD-20394"/>
<dbReference type="EMDB" id="EMD-20395"/>
<dbReference type="SMR" id="P0AEM6"/>
<dbReference type="BioGRID" id="4259656">
    <property type="interactions" value="39"/>
</dbReference>
<dbReference type="BioGRID" id="853104">
    <property type="interactions" value="3"/>
</dbReference>
<dbReference type="ComplexPortal" id="CPX-4886">
    <property type="entry name" value="DNA-directed RNA polymerase holoenzyme complex, SigmaF variant"/>
</dbReference>
<dbReference type="DIP" id="DIP-47959N"/>
<dbReference type="FunCoup" id="P0AEM6">
    <property type="interactions" value="445"/>
</dbReference>
<dbReference type="IntAct" id="P0AEM6">
    <property type="interactions" value="21"/>
</dbReference>
<dbReference type="STRING" id="511145.b1922"/>
<dbReference type="PaxDb" id="511145-b1922"/>
<dbReference type="EnsemblBacteria" id="AAC74989">
    <property type="protein sequence ID" value="AAC74989"/>
    <property type="gene ID" value="b1922"/>
</dbReference>
<dbReference type="GeneID" id="93776231"/>
<dbReference type="GeneID" id="948824"/>
<dbReference type="KEGG" id="ecj:JW1907"/>
<dbReference type="KEGG" id="eco:b1922"/>
<dbReference type="KEGG" id="ecoc:C3026_10905"/>
<dbReference type="PATRIC" id="fig|1411691.4.peg.327"/>
<dbReference type="EchoBASE" id="EB1330"/>
<dbReference type="eggNOG" id="COG1191">
    <property type="taxonomic scope" value="Bacteria"/>
</dbReference>
<dbReference type="HOGENOM" id="CLU_014793_8_1_6"/>
<dbReference type="InParanoid" id="P0AEM6"/>
<dbReference type="OMA" id="LMMENRM"/>
<dbReference type="OrthoDB" id="9799825at2"/>
<dbReference type="PhylomeDB" id="P0AEM6"/>
<dbReference type="BioCyc" id="EcoCyc:EG11355-MONOMER"/>
<dbReference type="BioCyc" id="MetaCyc:EG11355-MONOMER"/>
<dbReference type="PRO" id="PR:P0AEM6"/>
<dbReference type="Proteomes" id="UP000000625">
    <property type="component" value="Chromosome"/>
</dbReference>
<dbReference type="GO" id="GO:0005829">
    <property type="term" value="C:cytosol"/>
    <property type="evidence" value="ECO:0000314"/>
    <property type="project" value="EcoCyc"/>
</dbReference>
<dbReference type="GO" id="GO:0000345">
    <property type="term" value="C:cytosolic DNA-directed RNA polymerase complex"/>
    <property type="evidence" value="ECO:0000353"/>
    <property type="project" value="ComplexPortal"/>
</dbReference>
<dbReference type="GO" id="GO:0003677">
    <property type="term" value="F:DNA binding"/>
    <property type="evidence" value="ECO:0007669"/>
    <property type="project" value="UniProtKB-UniRule"/>
</dbReference>
<dbReference type="GO" id="GO:0003899">
    <property type="term" value="F:DNA-directed RNA polymerase activity"/>
    <property type="evidence" value="ECO:0007669"/>
    <property type="project" value="InterPro"/>
</dbReference>
<dbReference type="GO" id="GO:0016987">
    <property type="term" value="F:sigma factor activity"/>
    <property type="evidence" value="ECO:0000314"/>
    <property type="project" value="EcoCyc"/>
</dbReference>
<dbReference type="GO" id="GO:0044780">
    <property type="term" value="P:bacterial-type flagellum assembly"/>
    <property type="evidence" value="ECO:0000303"/>
    <property type="project" value="ComplexPortal"/>
</dbReference>
<dbReference type="GO" id="GO:0071973">
    <property type="term" value="P:bacterial-type flagellum-dependent cell motility"/>
    <property type="evidence" value="ECO:0000303"/>
    <property type="project" value="ComplexPortal"/>
</dbReference>
<dbReference type="GO" id="GO:0006352">
    <property type="term" value="P:DNA-templated transcription initiation"/>
    <property type="evidence" value="ECO:0000314"/>
    <property type="project" value="ComplexPortal"/>
</dbReference>
<dbReference type="GO" id="GO:0006355">
    <property type="term" value="P:regulation of DNA-templated transcription"/>
    <property type="evidence" value="ECO:0000318"/>
    <property type="project" value="GO_Central"/>
</dbReference>
<dbReference type="GO" id="GO:2000142">
    <property type="term" value="P:regulation of DNA-templated transcription initiation"/>
    <property type="evidence" value="ECO:0000314"/>
    <property type="project" value="ComplexPortal"/>
</dbReference>
<dbReference type="CDD" id="cd06171">
    <property type="entry name" value="Sigma70_r4"/>
    <property type="match status" value="1"/>
</dbReference>
<dbReference type="FunFam" id="1.10.1740.10:FF:000002">
    <property type="entry name" value="RNA polymerase sigma factor FliA"/>
    <property type="match status" value="1"/>
</dbReference>
<dbReference type="FunFam" id="1.20.140.160:FF:000001">
    <property type="entry name" value="RNA polymerase sigma factor FliA"/>
    <property type="match status" value="1"/>
</dbReference>
<dbReference type="Gene3D" id="1.10.1740.10">
    <property type="match status" value="1"/>
</dbReference>
<dbReference type="Gene3D" id="1.20.140.160">
    <property type="match status" value="1"/>
</dbReference>
<dbReference type="HAMAP" id="MF_00962">
    <property type="entry name" value="Sigma70_FliA"/>
    <property type="match status" value="1"/>
</dbReference>
<dbReference type="InterPro" id="IPR014284">
    <property type="entry name" value="RNA_pol_sigma-70_dom"/>
</dbReference>
<dbReference type="InterPro" id="IPR000943">
    <property type="entry name" value="RNA_pol_sigma70"/>
</dbReference>
<dbReference type="InterPro" id="IPR007627">
    <property type="entry name" value="RNA_pol_sigma70_r2"/>
</dbReference>
<dbReference type="InterPro" id="IPR007624">
    <property type="entry name" value="RNA_pol_sigma70_r3"/>
</dbReference>
<dbReference type="InterPro" id="IPR007630">
    <property type="entry name" value="RNA_pol_sigma70_r4"/>
</dbReference>
<dbReference type="InterPro" id="IPR012845">
    <property type="entry name" value="RNA_pol_sigma_FliA_WhiG"/>
</dbReference>
<dbReference type="InterPro" id="IPR013325">
    <property type="entry name" value="RNA_pol_sigma_r2"/>
</dbReference>
<dbReference type="InterPro" id="IPR013324">
    <property type="entry name" value="RNA_pol_sigma_r3/r4-like"/>
</dbReference>
<dbReference type="InterPro" id="IPR028617">
    <property type="entry name" value="Sigma70_FliA"/>
</dbReference>
<dbReference type="NCBIfam" id="TIGR02479">
    <property type="entry name" value="FliA_WhiG"/>
    <property type="match status" value="1"/>
</dbReference>
<dbReference type="NCBIfam" id="NF005413">
    <property type="entry name" value="PRK06986.1"/>
    <property type="match status" value="1"/>
</dbReference>
<dbReference type="NCBIfam" id="TIGR02937">
    <property type="entry name" value="sigma70-ECF"/>
    <property type="match status" value="1"/>
</dbReference>
<dbReference type="PANTHER" id="PTHR30385:SF7">
    <property type="entry name" value="RNA POLYMERASE SIGMA FACTOR FLIA"/>
    <property type="match status" value="1"/>
</dbReference>
<dbReference type="PANTHER" id="PTHR30385">
    <property type="entry name" value="SIGMA FACTOR F FLAGELLAR"/>
    <property type="match status" value="1"/>
</dbReference>
<dbReference type="Pfam" id="PF04542">
    <property type="entry name" value="Sigma70_r2"/>
    <property type="match status" value="1"/>
</dbReference>
<dbReference type="Pfam" id="PF04539">
    <property type="entry name" value="Sigma70_r3"/>
    <property type="match status" value="1"/>
</dbReference>
<dbReference type="Pfam" id="PF04545">
    <property type="entry name" value="Sigma70_r4"/>
    <property type="match status" value="1"/>
</dbReference>
<dbReference type="PIRSF" id="PIRSF000770">
    <property type="entry name" value="RNA_pol_sigma-SigE/K"/>
    <property type="match status" value="1"/>
</dbReference>
<dbReference type="PRINTS" id="PR00046">
    <property type="entry name" value="SIGMA70FCT"/>
</dbReference>
<dbReference type="SUPFAM" id="SSF88946">
    <property type="entry name" value="Sigma2 domain of RNA polymerase sigma factors"/>
    <property type="match status" value="1"/>
</dbReference>
<dbReference type="SUPFAM" id="SSF88659">
    <property type="entry name" value="Sigma3 and sigma4 domains of RNA polymerase sigma factors"/>
    <property type="match status" value="2"/>
</dbReference>
<dbReference type="PROSITE" id="PS00715">
    <property type="entry name" value="SIGMA70_1"/>
    <property type="match status" value="1"/>
</dbReference>
<dbReference type="PROSITE" id="PS00716">
    <property type="entry name" value="SIGMA70_2"/>
    <property type="match status" value="1"/>
</dbReference>
<feature type="chain" id="PRO_0000093981" description="RNA polymerase sigma factor FliA">
    <location>
        <begin position="1"/>
        <end position="239"/>
    </location>
</feature>
<feature type="DNA-binding region" description="H-T-H motif" evidence="2">
    <location>
        <begin position="207"/>
        <end position="226"/>
    </location>
</feature>
<feature type="region of interest" description="Sigma-70 factor domain-2">
    <location>
        <begin position="16"/>
        <end position="88"/>
    </location>
</feature>
<feature type="region of interest" description="Sigma-70 factor domain-3">
    <location>
        <begin position="96"/>
        <end position="166"/>
    </location>
</feature>
<feature type="region of interest" description="Sigma-70 factor domain-4">
    <location>
        <begin position="185"/>
        <end position="233"/>
    </location>
</feature>
<feature type="short sequence motif" description="Interaction with polymerase core subunit RpoC">
    <location>
        <begin position="43"/>
        <end position="46"/>
    </location>
</feature>
<feature type="mutagenesis site" description="No change in activity." evidence="4">
    <original>Q</original>
    <variation>A</variation>
    <location>
        <position position="73"/>
    </location>
</feature>
<feature type="mutagenesis site" description="Decrease in activity." evidence="4">
    <original>R</original>
    <variation>A</variation>
    <variation>W</variation>
    <location>
        <position position="74"/>
    </location>
</feature>
<feature type="mutagenesis site" description="Decrease in activity." evidence="4">
    <original>A</original>
    <variation>E</variation>
    <location>
        <position position="78"/>
    </location>
</feature>
<feature type="mutagenesis site" description="Loss of activity." evidence="4">
    <original>D</original>
    <variation>A</variation>
    <location>
        <position position="81"/>
    </location>
</feature>
<feature type="mutagenesis site" description="Loss of activity." evidence="4">
    <original>R</original>
    <variation>A</variation>
    <location>
        <position position="84"/>
    </location>
</feature>
<feature type="mutagenesis site" description="Loss of activity." evidence="4">
    <original>R</original>
    <variation>A</variation>
    <location>
        <position position="91"/>
    </location>
</feature>
<feature type="mutagenesis site" description="No change in activity." evidence="4">
    <original>S</original>
    <variation>A</variation>
    <location>
        <position position="92"/>
    </location>
</feature>
<feature type="mutagenesis site" description="Decrease in activity." evidence="4">
    <original>R</original>
    <variation>A</variation>
    <location>
        <position position="94"/>
    </location>
</feature>
<feature type="mutagenesis site" description="No change in activity." evidence="4">
    <original>R</original>
    <variation>A</variation>
    <location>
        <position position="95"/>
    </location>
</feature>
<feature type="mutagenesis site" description="No change in activity." evidence="4">
    <original>N</original>
    <variation>A</variation>
    <location>
        <position position="96"/>
    </location>
</feature>
<feature type="mutagenesis site" description="Strong decrease in activity." evidence="4">
    <original>R</original>
    <variation>A</variation>
    <location>
        <position position="98"/>
    </location>
</feature>
<organism>
    <name type="scientific">Escherichia coli (strain K12)</name>
    <dbReference type="NCBI Taxonomy" id="83333"/>
    <lineage>
        <taxon>Bacteria</taxon>
        <taxon>Pseudomonadati</taxon>
        <taxon>Pseudomonadota</taxon>
        <taxon>Gammaproteobacteria</taxon>
        <taxon>Enterobacterales</taxon>
        <taxon>Enterobacteriaceae</taxon>
        <taxon>Escherichia</taxon>
    </lineage>
</organism>
<name>FLIA_ECOLI</name>
<sequence>MNSLYTAEGVMDKHSLWQRYVPLVRHEALRLQVRLPASVELDDLLQAGGIGLLNAVERYDALQGTAFTTYAVQRIRGAMLDELRSRDWVPRSVRRNAREVAQAIGQLEQELGRNATETEVAERLGIDIADYRQMLLDTNNSQLFSYDEWREEHGDSIELVTDDHQRENPLQQLLDSNLRQRVMEAIETLPEREKLVLTLYYQEELNLKEIGAVLEVGESRVSQLHSQAIKRLRTKLGKL</sequence>
<gene>
    <name evidence="2" type="primary">fliA</name>
    <name type="synonym">flaD</name>
    <name type="synonym">rpoF</name>
    <name type="ordered locus">b1922</name>
    <name type="ordered locus">JW1907</name>
</gene>
<evidence type="ECO:0000250" key="1"/>
<evidence type="ECO:0000255" key="2">
    <source>
        <dbReference type="HAMAP-Rule" id="MF_00962"/>
    </source>
</evidence>
<evidence type="ECO:0000269" key="3">
    <source>
    </source>
</evidence>
<evidence type="ECO:0000269" key="4">
    <source>
    </source>
</evidence>
<evidence type="ECO:0000269" key="5">
    <source>
    </source>
</evidence>
<evidence type="ECO:0000269" key="6">
    <source>
    </source>
</evidence>
<evidence type="ECO:0000269" key="7">
    <source>
    </source>
</evidence>
<evidence type="ECO:0000269" key="8">
    <source>
    </source>
</evidence>
<evidence type="ECO:0000305" key="9">
    <source>
    </source>
</evidence>
<protein>
    <recommendedName>
        <fullName evidence="2">RNA polymerase sigma factor FliA</fullName>
    </recommendedName>
    <alternativeName>
        <fullName evidence="2">RNA polymerase sigma factor for flagellar operon</fullName>
    </alternativeName>
    <alternativeName>
        <fullName evidence="2">Sigma F</fullName>
    </alternativeName>
    <alternativeName>
        <fullName>Sigma-27</fullName>
    </alternativeName>
    <alternativeName>
        <fullName evidence="2">Sigma-28</fullName>
    </alternativeName>
</protein>